<dbReference type="EC" id="3.4.25.2" evidence="1"/>
<dbReference type="EMBL" id="CP000026">
    <property type="protein sequence ID" value="AAV79699.1"/>
    <property type="molecule type" value="Genomic_DNA"/>
</dbReference>
<dbReference type="RefSeq" id="WP_000208240.1">
    <property type="nucleotide sequence ID" value="NC_006511.1"/>
</dbReference>
<dbReference type="SMR" id="Q5PK45"/>
<dbReference type="MEROPS" id="T01.006"/>
<dbReference type="KEGG" id="spt:SPA3935"/>
<dbReference type="HOGENOM" id="CLU_093872_1_0_6"/>
<dbReference type="Proteomes" id="UP000008185">
    <property type="component" value="Chromosome"/>
</dbReference>
<dbReference type="GO" id="GO:0009376">
    <property type="term" value="C:HslUV protease complex"/>
    <property type="evidence" value="ECO:0007669"/>
    <property type="project" value="UniProtKB-UniRule"/>
</dbReference>
<dbReference type="GO" id="GO:0005839">
    <property type="term" value="C:proteasome core complex"/>
    <property type="evidence" value="ECO:0007669"/>
    <property type="project" value="InterPro"/>
</dbReference>
<dbReference type="GO" id="GO:0046872">
    <property type="term" value="F:metal ion binding"/>
    <property type="evidence" value="ECO:0007669"/>
    <property type="project" value="UniProtKB-KW"/>
</dbReference>
<dbReference type="GO" id="GO:0004298">
    <property type="term" value="F:threonine-type endopeptidase activity"/>
    <property type="evidence" value="ECO:0007669"/>
    <property type="project" value="UniProtKB-KW"/>
</dbReference>
<dbReference type="GO" id="GO:0051603">
    <property type="term" value="P:proteolysis involved in protein catabolic process"/>
    <property type="evidence" value="ECO:0007669"/>
    <property type="project" value="InterPro"/>
</dbReference>
<dbReference type="CDD" id="cd01913">
    <property type="entry name" value="protease_HslV"/>
    <property type="match status" value="1"/>
</dbReference>
<dbReference type="FunFam" id="3.60.20.10:FF:000002">
    <property type="entry name" value="ATP-dependent protease subunit HslV"/>
    <property type="match status" value="1"/>
</dbReference>
<dbReference type="Gene3D" id="3.60.20.10">
    <property type="entry name" value="Glutamine Phosphoribosylpyrophosphate, subunit 1, domain 1"/>
    <property type="match status" value="1"/>
</dbReference>
<dbReference type="HAMAP" id="MF_00248">
    <property type="entry name" value="HslV"/>
    <property type="match status" value="1"/>
</dbReference>
<dbReference type="InterPro" id="IPR022281">
    <property type="entry name" value="ATP-dep_Prtase_HsIV_su"/>
</dbReference>
<dbReference type="InterPro" id="IPR029055">
    <property type="entry name" value="Ntn_hydrolases_N"/>
</dbReference>
<dbReference type="InterPro" id="IPR001353">
    <property type="entry name" value="Proteasome_sua/b"/>
</dbReference>
<dbReference type="InterPro" id="IPR023333">
    <property type="entry name" value="Proteasome_suB-type"/>
</dbReference>
<dbReference type="NCBIfam" id="TIGR03692">
    <property type="entry name" value="ATP_dep_HslV"/>
    <property type="match status" value="1"/>
</dbReference>
<dbReference type="NCBIfam" id="NF003964">
    <property type="entry name" value="PRK05456.1"/>
    <property type="match status" value="1"/>
</dbReference>
<dbReference type="PANTHER" id="PTHR32194:SF0">
    <property type="entry name" value="ATP-DEPENDENT PROTEASE SUBUNIT HSLV"/>
    <property type="match status" value="1"/>
</dbReference>
<dbReference type="PANTHER" id="PTHR32194">
    <property type="entry name" value="METALLOPROTEASE TLDD"/>
    <property type="match status" value="1"/>
</dbReference>
<dbReference type="Pfam" id="PF00227">
    <property type="entry name" value="Proteasome"/>
    <property type="match status" value="1"/>
</dbReference>
<dbReference type="PIRSF" id="PIRSF039093">
    <property type="entry name" value="HslV"/>
    <property type="match status" value="1"/>
</dbReference>
<dbReference type="SUPFAM" id="SSF56235">
    <property type="entry name" value="N-terminal nucleophile aminohydrolases (Ntn hydrolases)"/>
    <property type="match status" value="1"/>
</dbReference>
<dbReference type="PROSITE" id="PS51476">
    <property type="entry name" value="PROTEASOME_BETA_2"/>
    <property type="match status" value="1"/>
</dbReference>
<evidence type="ECO:0000255" key="1">
    <source>
        <dbReference type="HAMAP-Rule" id="MF_00248"/>
    </source>
</evidence>
<sequence>MTTIVSVRRNGHVVIAGDGQATLGNTVMKGNVKKVRRLYNDKVIAGFAGGTADAFTLFELFERKLEMHQGHLVKAAVELAKDWRTDRMLRKLEALLAVADETASLIITGNGDVVQPENDLIAIGSGGPYAQAAARALLENTELGAREIAEKALDIAGDICIYTNHFHTIEELTAKA</sequence>
<protein>
    <recommendedName>
        <fullName evidence="1">ATP-dependent protease subunit HslV</fullName>
        <ecNumber evidence="1">3.4.25.2</ecNumber>
    </recommendedName>
    <alternativeName>
        <fullName evidence="1">Heat shock protein HslV</fullName>
    </alternativeName>
</protein>
<organism>
    <name type="scientific">Salmonella paratyphi A (strain ATCC 9150 / SARB42)</name>
    <dbReference type="NCBI Taxonomy" id="295319"/>
    <lineage>
        <taxon>Bacteria</taxon>
        <taxon>Pseudomonadati</taxon>
        <taxon>Pseudomonadota</taxon>
        <taxon>Gammaproteobacteria</taxon>
        <taxon>Enterobacterales</taxon>
        <taxon>Enterobacteriaceae</taxon>
        <taxon>Salmonella</taxon>
    </lineage>
</organism>
<name>HSLV_SALPA</name>
<proteinExistence type="inferred from homology"/>
<reference key="1">
    <citation type="journal article" date="2004" name="Nat. Genet.">
        <title>Comparison of genome degradation in Paratyphi A and Typhi, human-restricted serovars of Salmonella enterica that cause typhoid.</title>
        <authorList>
            <person name="McClelland M."/>
            <person name="Sanderson K.E."/>
            <person name="Clifton S.W."/>
            <person name="Latreille P."/>
            <person name="Porwollik S."/>
            <person name="Sabo A."/>
            <person name="Meyer R."/>
            <person name="Bieri T."/>
            <person name="Ozersky P."/>
            <person name="McLellan M."/>
            <person name="Harkins C.R."/>
            <person name="Wang C."/>
            <person name="Nguyen C."/>
            <person name="Berghoff A."/>
            <person name="Elliott G."/>
            <person name="Kohlberg S."/>
            <person name="Strong C."/>
            <person name="Du F."/>
            <person name="Carter J."/>
            <person name="Kremizki C."/>
            <person name="Layman D."/>
            <person name="Leonard S."/>
            <person name="Sun H."/>
            <person name="Fulton L."/>
            <person name="Nash W."/>
            <person name="Miner T."/>
            <person name="Minx P."/>
            <person name="Delehaunty K."/>
            <person name="Fronick C."/>
            <person name="Magrini V."/>
            <person name="Nhan M."/>
            <person name="Warren W."/>
            <person name="Florea L."/>
            <person name="Spieth J."/>
            <person name="Wilson R.K."/>
        </authorList>
    </citation>
    <scope>NUCLEOTIDE SEQUENCE [LARGE SCALE GENOMIC DNA]</scope>
    <source>
        <strain>ATCC 9150 / SARB42</strain>
    </source>
</reference>
<keyword id="KW-0021">Allosteric enzyme</keyword>
<keyword id="KW-0963">Cytoplasm</keyword>
<keyword id="KW-0378">Hydrolase</keyword>
<keyword id="KW-0479">Metal-binding</keyword>
<keyword id="KW-0645">Protease</keyword>
<keyword id="KW-0915">Sodium</keyword>
<keyword id="KW-0346">Stress response</keyword>
<keyword id="KW-0888">Threonine protease</keyword>
<feature type="chain" id="PRO_1000012663" description="ATP-dependent protease subunit HslV">
    <location>
        <begin position="1"/>
        <end position="176"/>
    </location>
</feature>
<feature type="active site" evidence="1">
    <location>
        <position position="2"/>
    </location>
</feature>
<feature type="binding site" evidence="1">
    <location>
        <position position="157"/>
    </location>
    <ligand>
        <name>Na(+)</name>
        <dbReference type="ChEBI" id="CHEBI:29101"/>
    </ligand>
</feature>
<feature type="binding site" evidence="1">
    <location>
        <position position="160"/>
    </location>
    <ligand>
        <name>Na(+)</name>
        <dbReference type="ChEBI" id="CHEBI:29101"/>
    </ligand>
</feature>
<feature type="binding site" evidence="1">
    <location>
        <position position="163"/>
    </location>
    <ligand>
        <name>Na(+)</name>
        <dbReference type="ChEBI" id="CHEBI:29101"/>
    </ligand>
</feature>
<gene>
    <name evidence="1" type="primary">hslV</name>
    <name type="ordered locus">SPA3935</name>
</gene>
<comment type="function">
    <text evidence="1">Protease subunit of a proteasome-like degradation complex believed to be a general protein degrading machinery.</text>
</comment>
<comment type="catalytic activity">
    <reaction evidence="1">
        <text>ATP-dependent cleavage of peptide bonds with broad specificity.</text>
        <dbReference type="EC" id="3.4.25.2"/>
    </reaction>
</comment>
<comment type="activity regulation">
    <text evidence="1">Allosterically activated by HslU binding.</text>
</comment>
<comment type="subunit">
    <text evidence="1">A double ring-shaped homohexamer of HslV is capped on each side by a ring-shaped HslU homohexamer. The assembly of the HslU/HslV complex is dependent on binding of ATP.</text>
</comment>
<comment type="subcellular location">
    <subcellularLocation>
        <location evidence="1">Cytoplasm</location>
    </subcellularLocation>
</comment>
<comment type="induction">
    <text evidence="1">By heat shock.</text>
</comment>
<comment type="similarity">
    <text evidence="1">Belongs to the peptidase T1B family. HslV subfamily.</text>
</comment>
<accession>Q5PK45</accession>